<name>PYRC_THEAQ</name>
<feature type="chain" id="PRO_0000147263" description="Dihydroorotase">
    <location>
        <begin position="1"/>
        <end position="426"/>
    </location>
</feature>
<feature type="active site" evidence="1">
    <location>
        <position position="306"/>
    </location>
</feature>
<feature type="binding site" evidence="1">
    <location>
        <position position="55"/>
    </location>
    <ligand>
        <name>Zn(2+)</name>
        <dbReference type="ChEBI" id="CHEBI:29105"/>
        <label>1</label>
    </ligand>
</feature>
<feature type="binding site" evidence="1">
    <location>
        <begin position="57"/>
        <end position="59"/>
    </location>
    <ligand>
        <name>substrate</name>
    </ligand>
</feature>
<feature type="binding site" evidence="1">
    <location>
        <position position="57"/>
    </location>
    <ligand>
        <name>Zn(2+)</name>
        <dbReference type="ChEBI" id="CHEBI:29105"/>
        <label>1</label>
    </ligand>
</feature>
<feature type="binding site" evidence="1">
    <location>
        <position position="89"/>
    </location>
    <ligand>
        <name>substrate</name>
    </ligand>
</feature>
<feature type="binding site" evidence="1">
    <location>
        <position position="147"/>
    </location>
    <ligand>
        <name>Zn(2+)</name>
        <dbReference type="ChEBI" id="CHEBI:29105"/>
        <label>1</label>
    </ligand>
</feature>
<feature type="binding site" evidence="1">
    <location>
        <position position="147"/>
    </location>
    <ligand>
        <name>Zn(2+)</name>
        <dbReference type="ChEBI" id="CHEBI:29105"/>
        <label>2</label>
    </ligand>
</feature>
<feature type="binding site" evidence="1">
    <location>
        <position position="174"/>
    </location>
    <ligand>
        <name>Zn(2+)</name>
        <dbReference type="ChEBI" id="CHEBI:29105"/>
        <label>2</label>
    </ligand>
</feature>
<feature type="binding site" evidence="1">
    <location>
        <position position="233"/>
    </location>
    <ligand>
        <name>Zn(2+)</name>
        <dbReference type="ChEBI" id="CHEBI:29105"/>
        <label>2</label>
    </ligand>
</feature>
<feature type="binding site" evidence="1">
    <location>
        <position position="306"/>
    </location>
    <ligand>
        <name>Zn(2+)</name>
        <dbReference type="ChEBI" id="CHEBI:29105"/>
        <label>1</label>
    </ligand>
</feature>
<feature type="binding site" evidence="1">
    <location>
        <position position="310"/>
    </location>
    <ligand>
        <name>substrate</name>
    </ligand>
</feature>
<feature type="binding site" evidence="1">
    <location>
        <begin position="324"/>
        <end position="325"/>
    </location>
    <ligand>
        <name>substrate</name>
    </ligand>
</feature>
<reference key="1">
    <citation type="journal article" date="1997" name="J. Bacteriol.">
        <title>Structure and expression of a pyrimidine gene cluster from the extreme thermophile Thermus strain ZO5.</title>
        <authorList>
            <person name="van de Casteele M."/>
            <person name="Chen P."/>
            <person name="Roovers M."/>
            <person name="Legrain C."/>
            <person name="Glansdorff N."/>
        </authorList>
    </citation>
    <scope>NUCLEOTIDE SEQUENCE [GENOMIC DNA]</scope>
    <source>
        <strain>ZO5</strain>
    </source>
</reference>
<proteinExistence type="inferred from homology"/>
<sequence>MILIRNVRLVDAMGERGPLDVLIGEGRILSLEGGEAKQVVDGTGCFLAPGFLDLHAHLREPGEEVKEDLFSGLLAAVRGGYTDLVSMPNTNPPVDTPEAVRALKEKAKALGLARLHPAAALTEKQEGKTLTPAGLLQEAGAVLLTDDGRTNEDAGVLAAGLLMAAPLGLPVAVHAEDAGLRRNGVMNDGPLADLLGLPGNPPEAEAARIARDLEVLRYALRRSPATPRLHVQHLSTKRGLELVREAKRAGLPVTAEATPHHLTLTEEALRTFDPLFKVAPPLRGEEDREALLEGLLDGTLDAIATDHAPHTQAEKEMDLLRAPFGIPSLEVAFPLLYTELHLKRGFPLRRLVELFTDGPRRVLGLPPLHLEEGTEASLVLLDPKERPVDPQGFASKARFSPWTGWRLGGWPVLTLVEGRIVHEALE</sequence>
<dbReference type="EC" id="3.5.2.3" evidence="1"/>
<dbReference type="EMBL" id="Y09536">
    <property type="protein sequence ID" value="CAA70731.1"/>
    <property type="molecule type" value="Genomic_DNA"/>
</dbReference>
<dbReference type="SMR" id="P96081"/>
<dbReference type="MEROPS" id="M38.972"/>
<dbReference type="UniPathway" id="UPA00070">
    <property type="reaction ID" value="UER00117"/>
</dbReference>
<dbReference type="GO" id="GO:0005737">
    <property type="term" value="C:cytoplasm"/>
    <property type="evidence" value="ECO:0007669"/>
    <property type="project" value="TreeGrafter"/>
</dbReference>
<dbReference type="GO" id="GO:0004038">
    <property type="term" value="F:allantoinase activity"/>
    <property type="evidence" value="ECO:0007669"/>
    <property type="project" value="TreeGrafter"/>
</dbReference>
<dbReference type="GO" id="GO:0004151">
    <property type="term" value="F:dihydroorotase activity"/>
    <property type="evidence" value="ECO:0007669"/>
    <property type="project" value="UniProtKB-UniRule"/>
</dbReference>
<dbReference type="GO" id="GO:0008270">
    <property type="term" value="F:zinc ion binding"/>
    <property type="evidence" value="ECO:0007669"/>
    <property type="project" value="UniProtKB-UniRule"/>
</dbReference>
<dbReference type="GO" id="GO:0044205">
    <property type="term" value="P:'de novo' UMP biosynthetic process"/>
    <property type="evidence" value="ECO:0007669"/>
    <property type="project" value="UniProtKB-UniRule"/>
</dbReference>
<dbReference type="GO" id="GO:0006145">
    <property type="term" value="P:purine nucleobase catabolic process"/>
    <property type="evidence" value="ECO:0007669"/>
    <property type="project" value="TreeGrafter"/>
</dbReference>
<dbReference type="CDD" id="cd01317">
    <property type="entry name" value="DHOase_IIa"/>
    <property type="match status" value="1"/>
</dbReference>
<dbReference type="Gene3D" id="3.20.20.140">
    <property type="entry name" value="Metal-dependent hydrolases"/>
    <property type="match status" value="1"/>
</dbReference>
<dbReference type="Gene3D" id="2.30.40.10">
    <property type="entry name" value="Urease, subunit C, domain 1"/>
    <property type="match status" value="1"/>
</dbReference>
<dbReference type="HAMAP" id="MF_00220_B">
    <property type="entry name" value="PyrC_classI_B"/>
    <property type="match status" value="1"/>
</dbReference>
<dbReference type="InterPro" id="IPR006680">
    <property type="entry name" value="Amidohydro-rel"/>
</dbReference>
<dbReference type="InterPro" id="IPR004722">
    <property type="entry name" value="DHOase"/>
</dbReference>
<dbReference type="InterPro" id="IPR050138">
    <property type="entry name" value="DHOase/Allantoinase_Hydrolase"/>
</dbReference>
<dbReference type="InterPro" id="IPR002195">
    <property type="entry name" value="Dihydroorotase_CS"/>
</dbReference>
<dbReference type="InterPro" id="IPR011059">
    <property type="entry name" value="Metal-dep_hydrolase_composite"/>
</dbReference>
<dbReference type="InterPro" id="IPR032466">
    <property type="entry name" value="Metal_Hydrolase"/>
</dbReference>
<dbReference type="NCBIfam" id="NF006841">
    <property type="entry name" value="PRK09357.2-2"/>
    <property type="match status" value="1"/>
</dbReference>
<dbReference type="NCBIfam" id="TIGR00857">
    <property type="entry name" value="pyrC_multi"/>
    <property type="match status" value="1"/>
</dbReference>
<dbReference type="PANTHER" id="PTHR43668">
    <property type="entry name" value="ALLANTOINASE"/>
    <property type="match status" value="1"/>
</dbReference>
<dbReference type="PANTHER" id="PTHR43668:SF2">
    <property type="entry name" value="ALLANTOINASE"/>
    <property type="match status" value="1"/>
</dbReference>
<dbReference type="Pfam" id="PF01979">
    <property type="entry name" value="Amidohydro_1"/>
    <property type="match status" value="1"/>
</dbReference>
<dbReference type="SUPFAM" id="SSF51338">
    <property type="entry name" value="Composite domain of metallo-dependent hydrolases"/>
    <property type="match status" value="1"/>
</dbReference>
<dbReference type="SUPFAM" id="SSF51556">
    <property type="entry name" value="Metallo-dependent hydrolases"/>
    <property type="match status" value="1"/>
</dbReference>
<dbReference type="PROSITE" id="PS00482">
    <property type="entry name" value="DIHYDROOROTASE_1"/>
    <property type="match status" value="1"/>
</dbReference>
<dbReference type="PROSITE" id="PS00483">
    <property type="entry name" value="DIHYDROOROTASE_2"/>
    <property type="match status" value="1"/>
</dbReference>
<protein>
    <recommendedName>
        <fullName evidence="1">Dihydroorotase</fullName>
        <shortName evidence="1">DHOase</shortName>
        <ecNumber evidence="1">3.5.2.3</ecNumber>
    </recommendedName>
</protein>
<keyword id="KW-0378">Hydrolase</keyword>
<keyword id="KW-0479">Metal-binding</keyword>
<keyword id="KW-0665">Pyrimidine biosynthesis</keyword>
<keyword id="KW-0862">Zinc</keyword>
<evidence type="ECO:0000255" key="1">
    <source>
        <dbReference type="HAMAP-Rule" id="MF_00220"/>
    </source>
</evidence>
<gene>
    <name evidence="1" type="primary">pyrC</name>
</gene>
<comment type="function">
    <text evidence="1">Catalyzes the reversible cyclization of carbamoyl aspartate to dihydroorotate.</text>
</comment>
<comment type="catalytic activity">
    <reaction evidence="1">
        <text>(S)-dihydroorotate + H2O = N-carbamoyl-L-aspartate + H(+)</text>
        <dbReference type="Rhea" id="RHEA:24296"/>
        <dbReference type="ChEBI" id="CHEBI:15377"/>
        <dbReference type="ChEBI" id="CHEBI:15378"/>
        <dbReference type="ChEBI" id="CHEBI:30864"/>
        <dbReference type="ChEBI" id="CHEBI:32814"/>
        <dbReference type="EC" id="3.5.2.3"/>
    </reaction>
</comment>
<comment type="cofactor">
    <cofactor evidence="1">
        <name>Zn(2+)</name>
        <dbReference type="ChEBI" id="CHEBI:29105"/>
    </cofactor>
    <text evidence="1">Binds 2 Zn(2+) ions per subunit.</text>
</comment>
<comment type="pathway">
    <text evidence="1">Pyrimidine metabolism; UMP biosynthesis via de novo pathway; (S)-dihydroorotate from bicarbonate: step 3/3.</text>
</comment>
<comment type="similarity">
    <text evidence="1">Belongs to the metallo-dependent hydrolases superfamily. DHOase family. Class I DHOase subfamily.</text>
</comment>
<accession>P96081</accession>
<organism>
    <name type="scientific">Thermus aquaticus</name>
    <dbReference type="NCBI Taxonomy" id="271"/>
    <lineage>
        <taxon>Bacteria</taxon>
        <taxon>Thermotogati</taxon>
        <taxon>Deinococcota</taxon>
        <taxon>Deinococci</taxon>
        <taxon>Thermales</taxon>
        <taxon>Thermaceae</taxon>
        <taxon>Thermus</taxon>
    </lineage>
</organism>